<accession>Q67256</accession>
<comment type="function">
    <text evidence="1">Inhibits post-transcriptional processing of cellular pre-mRNA, by binding and inhibiting two cellular proteins that are required for the 3'-end processing of cellular pre-mRNAs: the 30 kDa cleavage and polyadenylation specificity factor/CPSF4 and the poly(A)-binding protein 2/PABPN1. In turn, unprocessed 3' end pre-mRNAs accumulate in the host nucleus and are no longer exported to the cytoplasm. Cellular protein synthesis is thereby shut off very early after virus infection. Viral protein synthesis is not affected by the inhibition of the cellular 3' end processing machinery because the poly(A) tails of viral mRNAs are produced by the viral polymerase through a stuttering mechanism. Prevents the establishment of the cellular antiviral state by inhibiting TRIM25-mediated RIGI ubiquitination, which normally triggers the antiviral transduction signal that leads to the activation of type I IFN genes by transcription factors IRF3 and IRF7. Also binds poly(A) and U6 snRNA. Inhibits the integrated stress response (ISR) in the infected cell by blocking dsRNA binding by EIF2AK2/PKR and further phosphorylation of EIF2S1/EIF-2ALPHA. Stress granule formation is thus inhibited, which allows protein synthesis and viral replication.</text>
</comment>
<comment type="subunit">
    <text evidence="1">Homodimer. Interacts with host TRIM25 (via coiled coil); this interaction specifically inhibits TRIM25 multimerization and TRIM25-mediated RIGI CARD ubiquitination. Interacts with human EIF2AK2/PKR, CPSF4, IVNS1ABP and PABPN1.</text>
</comment>
<comment type="subcellular location">
    <subcellularLocation>
        <location evidence="1">Host nucleus</location>
    </subcellularLocation>
    <subcellularLocation>
        <location evidence="1">Host cytoplasm</location>
    </subcellularLocation>
    <text evidence="1">In uninfected, transfected cells, NS1 is localized in the nucleus. Only in virus infected cells, the nuclear export signal is unveiled, presumably by a viral protein, and a fraction of NS1 is exported in the cytoplasm.</text>
</comment>
<comment type="alternative products">
    <event type="alternative splicing"/>
    <isoform>
        <id>Q67256-1</id>
        <name>NS1</name>
        <sequence type="displayed"/>
    </isoform>
    <isoform>
        <id>Q67255-1</id>
        <name>NEP</name>
        <name>NS2</name>
        <sequence type="external"/>
    </isoform>
</comment>
<comment type="domain">
    <text evidence="1">The dsRNA-binding region is required for suppression of RNA silencing.</text>
</comment>
<comment type="PTM">
    <text evidence="1">Upon interferon induction, ISGylated via host HERC5; this results in the impairment of NS1 interaction with RNA targets due to its inability to form homodimers and to interact with host EIF2AK2/PKR.</text>
</comment>
<comment type="similarity">
    <text evidence="1">Belongs to the influenza A viruses NS1 family.</text>
</comment>
<protein>
    <recommendedName>
        <fullName evidence="1">Non-structural protein 1</fullName>
        <shortName evidence="1">NS1</shortName>
    </recommendedName>
    <alternativeName>
        <fullName evidence="1">NS1A</fullName>
    </alternativeName>
</protein>
<name>NS1_I72A5</name>
<organismHost>
    <name type="scientific">Aves</name>
    <dbReference type="NCBI Taxonomy" id="8782"/>
</organismHost>
<feature type="chain" id="PRO_0000324252" description="Non-structural protein 1">
    <location>
        <begin position="1"/>
        <end position="230"/>
    </location>
</feature>
<feature type="region of interest" description="RNA-binding and homodimerization" evidence="1">
    <location>
        <begin position="1"/>
        <end position="73"/>
    </location>
</feature>
<feature type="region of interest" description="CPSF4-binding" evidence="1">
    <location>
        <begin position="180"/>
        <end position="215"/>
    </location>
</feature>
<feature type="region of interest" description="Disordered" evidence="2">
    <location>
        <begin position="205"/>
        <end position="230"/>
    </location>
</feature>
<feature type="region of interest" description="PABPN1-binding" evidence="1">
    <location>
        <begin position="223"/>
        <end position="230"/>
    </location>
</feature>
<feature type="short sequence motif" description="Nuclear localization signal" evidence="1">
    <location>
        <begin position="34"/>
        <end position="38"/>
    </location>
</feature>
<feature type="short sequence motif" description="Nuclear export signal" evidence="1">
    <location>
        <begin position="137"/>
        <end position="146"/>
    </location>
</feature>
<gene>
    <name evidence="1" type="primary">NS</name>
</gene>
<sequence>MDSNTVSSFQVDCFLWHVRKRFADQERGDAPFLDRLRRDQKSLRGRGSTLGLDIETATCAGKQIVERILKEESDEALKMTIASVPASRYLTDMTLEEMSRDWFMLMPKQKVAGSLCIRMDQAIMDKNIILKANFSVIFDRLETLILLRAFTEEGAIVGEISPLPSLPGHTDEDVKNAIGVLIGGLEWNDNTVRVSETLQRFAWRSSNEDGRPPFPPKQKRKMARTIESEV</sequence>
<dbReference type="EMBL" id="L25830">
    <property type="protein sequence ID" value="AAA43491.1"/>
    <property type="molecule type" value="Genomic_RNA"/>
</dbReference>
<dbReference type="SMR" id="Q67256"/>
<dbReference type="Proteomes" id="UP000157292">
    <property type="component" value="Genome"/>
</dbReference>
<dbReference type="GO" id="GO:0030430">
    <property type="term" value="C:host cell cytoplasm"/>
    <property type="evidence" value="ECO:0007669"/>
    <property type="project" value="UniProtKB-SubCell"/>
</dbReference>
<dbReference type="GO" id="GO:0042025">
    <property type="term" value="C:host cell nucleus"/>
    <property type="evidence" value="ECO:0007669"/>
    <property type="project" value="UniProtKB-SubCell"/>
</dbReference>
<dbReference type="GO" id="GO:0030291">
    <property type="term" value="F:protein serine/threonine kinase inhibitor activity"/>
    <property type="evidence" value="ECO:0007669"/>
    <property type="project" value="UniProtKB-KW"/>
</dbReference>
<dbReference type="GO" id="GO:0003723">
    <property type="term" value="F:RNA binding"/>
    <property type="evidence" value="ECO:0007669"/>
    <property type="project" value="UniProtKB-KW"/>
</dbReference>
<dbReference type="GO" id="GO:0039540">
    <property type="term" value="P:symbiont-mediated suppression of host cytoplasmic pattern recognition receptor signaling pathway via inhibition of RIG-I activity"/>
    <property type="evidence" value="ECO:0007669"/>
    <property type="project" value="UniProtKB-KW"/>
</dbReference>
<dbReference type="GO" id="GO:0039657">
    <property type="term" value="P:symbiont-mediated suppression of host gene expression"/>
    <property type="evidence" value="ECO:0007669"/>
    <property type="project" value="UniProtKB-KW"/>
</dbReference>
<dbReference type="GO" id="GO:0039524">
    <property type="term" value="P:symbiont-mediated suppression of host mRNA processing"/>
    <property type="evidence" value="ECO:0007669"/>
    <property type="project" value="UniProtKB-KW"/>
</dbReference>
<dbReference type="GO" id="GO:0039580">
    <property type="term" value="P:symbiont-mediated suppression of host PKR/eIFalpha signaling"/>
    <property type="evidence" value="ECO:0007669"/>
    <property type="project" value="UniProtKB-KW"/>
</dbReference>
<dbReference type="GO" id="GO:0039502">
    <property type="term" value="P:symbiont-mediated suppression of host type I interferon-mediated signaling pathway"/>
    <property type="evidence" value="ECO:0007669"/>
    <property type="project" value="UniProtKB-KW"/>
</dbReference>
<dbReference type="FunFam" id="1.10.287.10:FF:000001">
    <property type="entry name" value="Non-structural protein 1"/>
    <property type="match status" value="1"/>
</dbReference>
<dbReference type="FunFam" id="3.30.420.330:FF:000001">
    <property type="entry name" value="Non-structural protein 1"/>
    <property type="match status" value="1"/>
</dbReference>
<dbReference type="Gene3D" id="3.30.420.330">
    <property type="entry name" value="Influenza virus non-structural protein, effector domain"/>
    <property type="match status" value="1"/>
</dbReference>
<dbReference type="Gene3D" id="1.10.287.10">
    <property type="entry name" value="S15/NS1, RNA-binding"/>
    <property type="match status" value="1"/>
</dbReference>
<dbReference type="HAMAP" id="MF_04066">
    <property type="entry name" value="INFV_NS1"/>
    <property type="match status" value="1"/>
</dbReference>
<dbReference type="InterPro" id="IPR004208">
    <property type="entry name" value="NS1"/>
</dbReference>
<dbReference type="InterPro" id="IPR000256">
    <property type="entry name" value="NS1A"/>
</dbReference>
<dbReference type="InterPro" id="IPR038064">
    <property type="entry name" value="NS1A_effect_dom-like_sf"/>
</dbReference>
<dbReference type="InterPro" id="IPR009068">
    <property type="entry name" value="uS15_NS1_RNA-bd_sf"/>
</dbReference>
<dbReference type="Pfam" id="PF00600">
    <property type="entry name" value="Flu_NS1"/>
    <property type="match status" value="1"/>
</dbReference>
<dbReference type="SUPFAM" id="SSF143021">
    <property type="entry name" value="Ns1 effector domain-like"/>
    <property type="match status" value="1"/>
</dbReference>
<dbReference type="SUPFAM" id="SSF47060">
    <property type="entry name" value="S15/NS1 RNA-binding domain"/>
    <property type="match status" value="1"/>
</dbReference>
<proteinExistence type="inferred from homology"/>
<keyword id="KW-0025">Alternative splicing</keyword>
<keyword id="KW-1262">Eukaryotic host gene expression shutoff by virus</keyword>
<keyword id="KW-1035">Host cytoplasm</keyword>
<keyword id="KW-1190">Host gene expression shutoff by virus</keyword>
<keyword id="KW-1192">Host mRNA suppression by virus</keyword>
<keyword id="KW-1048">Host nucleus</keyword>
<keyword id="KW-0945">Host-virus interaction</keyword>
<keyword id="KW-1090">Inhibition of host innate immune response by virus</keyword>
<keyword id="KW-1114">Inhibition of host interferon signaling pathway by virus</keyword>
<keyword id="KW-1102">Inhibition of host PKR by virus</keyword>
<keyword id="KW-1103">Inhibition of host pre-mRNA processing by virus</keyword>
<keyword id="KW-1088">Inhibition of host RIG-I by virus</keyword>
<keyword id="KW-1113">Inhibition of host RLR pathway by virus</keyword>
<keyword id="KW-0922">Interferon antiviral system evasion</keyword>
<keyword id="KW-0694">RNA-binding</keyword>
<keyword id="KW-0832">Ubl conjugation</keyword>
<keyword id="KW-0899">Viral immunoevasion</keyword>
<reference key="1">
    <citation type="submission" date="1993-11" db="EMBL/GenBank/DDBJ databases">
        <title>Influenza NS1 protein.</title>
        <authorList>
            <person name="Ward A.C."/>
        </authorList>
    </citation>
    <scope>NUCLEOTIDE SEQUENCE [GENOMIC RNA]</scope>
</reference>
<organism>
    <name type="scientific">Influenza A virus (strain A/Shearwater/Australia/1972 H6N5)</name>
    <dbReference type="NCBI Taxonomy" id="383604"/>
    <lineage>
        <taxon>Viruses</taxon>
        <taxon>Riboviria</taxon>
        <taxon>Orthornavirae</taxon>
        <taxon>Negarnaviricota</taxon>
        <taxon>Polyploviricotina</taxon>
        <taxon>Insthoviricetes</taxon>
        <taxon>Articulavirales</taxon>
        <taxon>Orthomyxoviridae</taxon>
        <taxon>Alphainfluenzavirus</taxon>
        <taxon>Alphainfluenzavirus influenzae</taxon>
        <taxon>Influenza A virus</taxon>
    </lineage>
</organism>
<evidence type="ECO:0000255" key="1">
    <source>
        <dbReference type="HAMAP-Rule" id="MF_04066"/>
    </source>
</evidence>
<evidence type="ECO:0000256" key="2">
    <source>
        <dbReference type="SAM" id="MobiDB-lite"/>
    </source>
</evidence>